<keyword id="KW-0963">Cytoplasm</keyword>
<keyword id="KW-0456">Lyase</keyword>
<keyword id="KW-0704">Schiff base</keyword>
<proteinExistence type="inferred from homology"/>
<feature type="chain" id="PRO_1000094858" description="Deoxyribose-phosphate aldolase">
    <location>
        <begin position="1"/>
        <end position="220"/>
    </location>
</feature>
<feature type="active site" description="Proton donor/acceptor" evidence="1">
    <location>
        <position position="89"/>
    </location>
</feature>
<feature type="active site" description="Schiff-base intermediate with acetaldehyde" evidence="1">
    <location>
        <position position="151"/>
    </location>
</feature>
<feature type="active site" description="Proton donor/acceptor" evidence="1">
    <location>
        <position position="180"/>
    </location>
</feature>
<accession>B2INW0</accession>
<evidence type="ECO:0000255" key="1">
    <source>
        <dbReference type="HAMAP-Rule" id="MF_00114"/>
    </source>
</evidence>
<name>DEOC_STRPS</name>
<sequence>MKLNKYIDHTLLKQDAKKKQIDSLLSEAREYGFASVCVNPTWVEHAKKGLEGTDVKVCTVVGFPLGATTSAVKAFETKEAIQNGADEIDMVINVGALKSGNLALVESDIRAVVEASGDKLVKVIIEACLLTDQEKVVVCQLAQKAGADFVKTSTGFSTGGATIADVTLMRETVGSDMGVKAAGGARSYADALAFVEAGATRIGTSAGVAILKGELADGDY</sequence>
<protein>
    <recommendedName>
        <fullName evidence="1">Deoxyribose-phosphate aldolase</fullName>
        <shortName evidence="1">DERA</shortName>
        <ecNumber evidence="1">4.1.2.4</ecNumber>
    </recommendedName>
    <alternativeName>
        <fullName evidence="1">2-deoxy-D-ribose 5-phosphate aldolase</fullName>
    </alternativeName>
    <alternativeName>
        <fullName evidence="1">Phosphodeoxyriboaldolase</fullName>
        <shortName evidence="1">Deoxyriboaldolase</shortName>
    </alternativeName>
</protein>
<comment type="function">
    <text evidence="1">Catalyzes a reversible aldol reaction between acetaldehyde and D-glyceraldehyde 3-phosphate to generate 2-deoxy-D-ribose 5-phosphate.</text>
</comment>
<comment type="catalytic activity">
    <reaction evidence="1">
        <text>2-deoxy-D-ribose 5-phosphate = D-glyceraldehyde 3-phosphate + acetaldehyde</text>
        <dbReference type="Rhea" id="RHEA:12821"/>
        <dbReference type="ChEBI" id="CHEBI:15343"/>
        <dbReference type="ChEBI" id="CHEBI:59776"/>
        <dbReference type="ChEBI" id="CHEBI:62877"/>
        <dbReference type="EC" id="4.1.2.4"/>
    </reaction>
</comment>
<comment type="pathway">
    <text evidence="1">Carbohydrate degradation; 2-deoxy-D-ribose 1-phosphate degradation; D-glyceraldehyde 3-phosphate and acetaldehyde from 2-deoxy-alpha-D-ribose 1-phosphate: step 2/2.</text>
</comment>
<comment type="subcellular location">
    <subcellularLocation>
        <location evidence="1">Cytoplasm</location>
    </subcellularLocation>
</comment>
<comment type="similarity">
    <text evidence="1">Belongs to the DeoC/FbaB aldolase family. DeoC type 1 subfamily.</text>
</comment>
<reference key="1">
    <citation type="journal article" date="2009" name="BMC Genomics">
        <title>Genome evolution driven by host adaptations results in a more virulent and antimicrobial-resistant Streptococcus pneumoniae serotype 14.</title>
        <authorList>
            <person name="Ding F."/>
            <person name="Tang P."/>
            <person name="Hsu M.-H."/>
            <person name="Cui P."/>
            <person name="Hu S."/>
            <person name="Yu J."/>
            <person name="Chiu C.-H."/>
        </authorList>
    </citation>
    <scope>NUCLEOTIDE SEQUENCE [LARGE SCALE GENOMIC DNA]</scope>
    <source>
        <strain>CGSP14</strain>
    </source>
</reference>
<organism>
    <name type="scientific">Streptococcus pneumoniae (strain CGSP14)</name>
    <dbReference type="NCBI Taxonomy" id="516950"/>
    <lineage>
        <taxon>Bacteria</taxon>
        <taxon>Bacillati</taxon>
        <taxon>Bacillota</taxon>
        <taxon>Bacilli</taxon>
        <taxon>Lactobacillales</taxon>
        <taxon>Streptococcaceae</taxon>
        <taxon>Streptococcus</taxon>
    </lineage>
</organism>
<gene>
    <name evidence="1" type="primary">deoC</name>
    <name type="ordered locus">SPCG_0785</name>
</gene>
<dbReference type="EC" id="4.1.2.4" evidence="1"/>
<dbReference type="EMBL" id="CP001033">
    <property type="protein sequence ID" value="ACB90037.1"/>
    <property type="molecule type" value="Genomic_DNA"/>
</dbReference>
<dbReference type="RefSeq" id="WP_000773687.1">
    <property type="nucleotide sequence ID" value="NC_010582.1"/>
</dbReference>
<dbReference type="SMR" id="B2INW0"/>
<dbReference type="KEGG" id="spw:SPCG_0785"/>
<dbReference type="HOGENOM" id="CLU_053595_0_0_9"/>
<dbReference type="UniPathway" id="UPA00002">
    <property type="reaction ID" value="UER00468"/>
</dbReference>
<dbReference type="GO" id="GO:0005737">
    <property type="term" value="C:cytoplasm"/>
    <property type="evidence" value="ECO:0007669"/>
    <property type="project" value="UniProtKB-SubCell"/>
</dbReference>
<dbReference type="GO" id="GO:0004139">
    <property type="term" value="F:deoxyribose-phosphate aldolase activity"/>
    <property type="evidence" value="ECO:0007669"/>
    <property type="project" value="UniProtKB-UniRule"/>
</dbReference>
<dbReference type="GO" id="GO:0006018">
    <property type="term" value="P:2-deoxyribose 1-phosphate catabolic process"/>
    <property type="evidence" value="ECO:0007669"/>
    <property type="project" value="UniProtKB-UniRule"/>
</dbReference>
<dbReference type="GO" id="GO:0016052">
    <property type="term" value="P:carbohydrate catabolic process"/>
    <property type="evidence" value="ECO:0007669"/>
    <property type="project" value="TreeGrafter"/>
</dbReference>
<dbReference type="GO" id="GO:0009264">
    <property type="term" value="P:deoxyribonucleotide catabolic process"/>
    <property type="evidence" value="ECO:0007669"/>
    <property type="project" value="InterPro"/>
</dbReference>
<dbReference type="CDD" id="cd00959">
    <property type="entry name" value="DeoC"/>
    <property type="match status" value="1"/>
</dbReference>
<dbReference type="FunFam" id="3.20.20.70:FF:000044">
    <property type="entry name" value="Deoxyribose-phosphate aldolase"/>
    <property type="match status" value="1"/>
</dbReference>
<dbReference type="Gene3D" id="3.20.20.70">
    <property type="entry name" value="Aldolase class I"/>
    <property type="match status" value="1"/>
</dbReference>
<dbReference type="HAMAP" id="MF_00114">
    <property type="entry name" value="DeoC_type1"/>
    <property type="match status" value="1"/>
</dbReference>
<dbReference type="InterPro" id="IPR013785">
    <property type="entry name" value="Aldolase_TIM"/>
</dbReference>
<dbReference type="InterPro" id="IPR011343">
    <property type="entry name" value="DeoC"/>
</dbReference>
<dbReference type="InterPro" id="IPR002915">
    <property type="entry name" value="DeoC/FbaB/LacD_aldolase"/>
</dbReference>
<dbReference type="InterPro" id="IPR028581">
    <property type="entry name" value="DeoC_typeI"/>
</dbReference>
<dbReference type="NCBIfam" id="TIGR00126">
    <property type="entry name" value="deoC"/>
    <property type="match status" value="1"/>
</dbReference>
<dbReference type="PANTHER" id="PTHR10889">
    <property type="entry name" value="DEOXYRIBOSE-PHOSPHATE ALDOLASE"/>
    <property type="match status" value="1"/>
</dbReference>
<dbReference type="PANTHER" id="PTHR10889:SF1">
    <property type="entry name" value="DEOXYRIBOSE-PHOSPHATE ALDOLASE"/>
    <property type="match status" value="1"/>
</dbReference>
<dbReference type="Pfam" id="PF01791">
    <property type="entry name" value="DeoC"/>
    <property type="match status" value="1"/>
</dbReference>
<dbReference type="PIRSF" id="PIRSF001357">
    <property type="entry name" value="DeoC"/>
    <property type="match status" value="1"/>
</dbReference>
<dbReference type="SMART" id="SM01133">
    <property type="entry name" value="DeoC"/>
    <property type="match status" value="1"/>
</dbReference>
<dbReference type="SUPFAM" id="SSF51569">
    <property type="entry name" value="Aldolase"/>
    <property type="match status" value="1"/>
</dbReference>